<organism>
    <name type="scientific">Wigglesworthia glossinidia brevipalpis</name>
    <dbReference type="NCBI Taxonomy" id="36870"/>
    <lineage>
        <taxon>Bacteria</taxon>
        <taxon>Pseudomonadati</taxon>
        <taxon>Pseudomonadota</taxon>
        <taxon>Gammaproteobacteria</taxon>
        <taxon>Enterobacterales</taxon>
        <taxon>Erwiniaceae</taxon>
        <taxon>Wigglesworthia</taxon>
    </lineage>
</organism>
<proteinExistence type="inferred from homology"/>
<accession>Q8D2H8</accession>
<keyword id="KW-0413">Isomerase</keyword>
<keyword id="KW-0663">Pyridoxal phosphate</keyword>
<keyword id="KW-1185">Reference proteome</keyword>
<sequence>MPRKTTIRISSNALASNLRTIKNYANKSKVWSVIKSNAYGHTIKAALKGLKETSGFAVLELNEAVLLRENGWNGPILLLEGFFEESDLLEICQYKITTVIHNDWQLNYIKQYDIKSPIDVYLKLNSGMNRLGFNEKDFIRTWYDLSNLKKISSLTLMSHFSLGFSTKTVNKQMNIIRKIFKILNPTLCLANSTAIIFHTYTHKDWIRPGIILYGILPKENKKISKKFNLKPVMTLESRIISIQNIKSKEYIGYGKNYYSNKSNLIGIVSCGYADGYPFSVPFSGTPVFVNGTRTQIIGSVCMDMLTIDLNDCPNAKIGSKVELWGNNISINEISKLANTTSYELMCRISSRVLVKIE</sequence>
<gene>
    <name type="primary">alr</name>
    <name type="synonym">dadX</name>
    <name type="ordered locus">WIGBR3760</name>
</gene>
<name>ALR_WIGBR</name>
<feature type="chain" id="PRO_0000114597" description="Alanine racemase">
    <location>
        <begin position="1"/>
        <end position="357"/>
    </location>
</feature>
<feature type="active site" description="Proton acceptor; specific for D-alanine" evidence="1">
    <location>
        <position position="35"/>
    </location>
</feature>
<feature type="active site" description="Proton acceptor; specific for L-alanine" evidence="1">
    <location>
        <position position="253"/>
    </location>
</feature>
<feature type="binding site" evidence="1">
    <location>
        <position position="130"/>
    </location>
    <ligand>
        <name>substrate</name>
    </ligand>
</feature>
<feature type="binding site" evidence="1">
    <location>
        <position position="302"/>
    </location>
    <ligand>
        <name>substrate</name>
    </ligand>
</feature>
<feature type="modified residue" description="N6-(pyridoxal phosphate)lysine" evidence="1">
    <location>
        <position position="35"/>
    </location>
</feature>
<comment type="function">
    <text evidence="1">Catalyzes the interconversion of L-alanine and D-alanine. May also act on other amino acids.</text>
</comment>
<comment type="catalytic activity">
    <reaction evidence="1">
        <text>L-alanine = D-alanine</text>
        <dbReference type="Rhea" id="RHEA:20249"/>
        <dbReference type="ChEBI" id="CHEBI:57416"/>
        <dbReference type="ChEBI" id="CHEBI:57972"/>
        <dbReference type="EC" id="5.1.1.1"/>
    </reaction>
</comment>
<comment type="cofactor">
    <cofactor evidence="1">
        <name>pyridoxal 5'-phosphate</name>
        <dbReference type="ChEBI" id="CHEBI:597326"/>
    </cofactor>
</comment>
<comment type="pathway">
    <text evidence="1">Amino-acid biosynthesis; D-alanine biosynthesis; D-alanine from L-alanine: step 1/1.</text>
</comment>
<comment type="similarity">
    <text evidence="1">Belongs to the alanine racemase family.</text>
</comment>
<evidence type="ECO:0000255" key="1">
    <source>
        <dbReference type="HAMAP-Rule" id="MF_01201"/>
    </source>
</evidence>
<reference key="1">
    <citation type="journal article" date="2002" name="Nat. Genet.">
        <title>Genome sequence of the endocellular obligate symbiont of tsetse flies, Wigglesworthia glossinidia.</title>
        <authorList>
            <person name="Akman L."/>
            <person name="Yamashita A."/>
            <person name="Watanabe H."/>
            <person name="Oshima K."/>
            <person name="Shiba T."/>
            <person name="Hattori M."/>
            <person name="Aksoy S."/>
        </authorList>
    </citation>
    <scope>NUCLEOTIDE SEQUENCE [LARGE SCALE GENOMIC DNA]</scope>
</reference>
<protein>
    <recommendedName>
        <fullName evidence="1">Alanine racemase</fullName>
        <ecNumber evidence="1">5.1.1.1</ecNumber>
    </recommendedName>
</protein>
<dbReference type="EC" id="5.1.1.1" evidence="1"/>
<dbReference type="EMBL" id="BA000021">
    <property type="protein sequence ID" value="BAC24522.1"/>
    <property type="molecule type" value="Genomic_DNA"/>
</dbReference>
<dbReference type="SMR" id="Q8D2H8"/>
<dbReference type="STRING" id="36870.gene:10368876"/>
<dbReference type="KEGG" id="wbr:dadX"/>
<dbReference type="eggNOG" id="COG0787">
    <property type="taxonomic scope" value="Bacteria"/>
</dbReference>
<dbReference type="HOGENOM" id="CLU_028393_1_0_6"/>
<dbReference type="OrthoDB" id="9813814at2"/>
<dbReference type="UniPathway" id="UPA00042">
    <property type="reaction ID" value="UER00497"/>
</dbReference>
<dbReference type="Proteomes" id="UP000000562">
    <property type="component" value="Chromosome"/>
</dbReference>
<dbReference type="GO" id="GO:0005829">
    <property type="term" value="C:cytosol"/>
    <property type="evidence" value="ECO:0007669"/>
    <property type="project" value="TreeGrafter"/>
</dbReference>
<dbReference type="GO" id="GO:0008784">
    <property type="term" value="F:alanine racemase activity"/>
    <property type="evidence" value="ECO:0007669"/>
    <property type="project" value="UniProtKB-UniRule"/>
</dbReference>
<dbReference type="GO" id="GO:0030170">
    <property type="term" value="F:pyridoxal phosphate binding"/>
    <property type="evidence" value="ECO:0007669"/>
    <property type="project" value="UniProtKB-UniRule"/>
</dbReference>
<dbReference type="GO" id="GO:0030632">
    <property type="term" value="P:D-alanine biosynthetic process"/>
    <property type="evidence" value="ECO:0007669"/>
    <property type="project" value="UniProtKB-UniRule"/>
</dbReference>
<dbReference type="CDD" id="cd06827">
    <property type="entry name" value="PLPDE_III_AR_proteobact"/>
    <property type="match status" value="1"/>
</dbReference>
<dbReference type="FunFam" id="3.20.20.10:FF:000002">
    <property type="entry name" value="Alanine racemase"/>
    <property type="match status" value="1"/>
</dbReference>
<dbReference type="Gene3D" id="3.20.20.10">
    <property type="entry name" value="Alanine racemase"/>
    <property type="match status" value="1"/>
</dbReference>
<dbReference type="Gene3D" id="2.40.37.10">
    <property type="entry name" value="Lyase, Ornithine Decarboxylase, Chain A, domain 1"/>
    <property type="match status" value="1"/>
</dbReference>
<dbReference type="HAMAP" id="MF_01201">
    <property type="entry name" value="Ala_racemase"/>
    <property type="match status" value="1"/>
</dbReference>
<dbReference type="InterPro" id="IPR000821">
    <property type="entry name" value="Ala_racemase"/>
</dbReference>
<dbReference type="InterPro" id="IPR009006">
    <property type="entry name" value="Ala_racemase/Decarboxylase_C"/>
</dbReference>
<dbReference type="InterPro" id="IPR011079">
    <property type="entry name" value="Ala_racemase_C"/>
</dbReference>
<dbReference type="InterPro" id="IPR001608">
    <property type="entry name" value="Ala_racemase_N"/>
</dbReference>
<dbReference type="InterPro" id="IPR029066">
    <property type="entry name" value="PLP-binding_barrel"/>
</dbReference>
<dbReference type="NCBIfam" id="TIGR00492">
    <property type="entry name" value="alr"/>
    <property type="match status" value="1"/>
</dbReference>
<dbReference type="PANTHER" id="PTHR30511">
    <property type="entry name" value="ALANINE RACEMASE"/>
    <property type="match status" value="1"/>
</dbReference>
<dbReference type="PANTHER" id="PTHR30511:SF0">
    <property type="entry name" value="ALANINE RACEMASE, CATABOLIC-RELATED"/>
    <property type="match status" value="1"/>
</dbReference>
<dbReference type="Pfam" id="PF00842">
    <property type="entry name" value="Ala_racemase_C"/>
    <property type="match status" value="1"/>
</dbReference>
<dbReference type="Pfam" id="PF01168">
    <property type="entry name" value="Ala_racemase_N"/>
    <property type="match status" value="1"/>
</dbReference>
<dbReference type="PRINTS" id="PR00992">
    <property type="entry name" value="ALARACEMASE"/>
</dbReference>
<dbReference type="SMART" id="SM01005">
    <property type="entry name" value="Ala_racemase_C"/>
    <property type="match status" value="1"/>
</dbReference>
<dbReference type="SUPFAM" id="SSF50621">
    <property type="entry name" value="Alanine racemase C-terminal domain-like"/>
    <property type="match status" value="1"/>
</dbReference>
<dbReference type="SUPFAM" id="SSF51419">
    <property type="entry name" value="PLP-binding barrel"/>
    <property type="match status" value="1"/>
</dbReference>